<proteinExistence type="inferred from homology"/>
<organism>
    <name type="scientific">Cronobacter sakazakii (strain ATCC BAA-894)</name>
    <name type="common">Enterobacter sakazakii</name>
    <dbReference type="NCBI Taxonomy" id="290339"/>
    <lineage>
        <taxon>Bacteria</taxon>
        <taxon>Pseudomonadati</taxon>
        <taxon>Pseudomonadota</taxon>
        <taxon>Gammaproteobacteria</taxon>
        <taxon>Enterobacterales</taxon>
        <taxon>Enterobacteriaceae</taxon>
        <taxon>Cronobacter</taxon>
    </lineage>
</organism>
<name>RNFB_CROS8</name>
<dbReference type="EC" id="7.-.-.-" evidence="1"/>
<dbReference type="EMBL" id="CP000783">
    <property type="protein sequence ID" value="ABU77240.1"/>
    <property type="molecule type" value="Genomic_DNA"/>
</dbReference>
<dbReference type="KEGG" id="esa:ESA_01987"/>
<dbReference type="HOGENOM" id="CLU_063448_2_0_6"/>
<dbReference type="Proteomes" id="UP000000260">
    <property type="component" value="Chromosome"/>
</dbReference>
<dbReference type="GO" id="GO:0005886">
    <property type="term" value="C:plasma membrane"/>
    <property type="evidence" value="ECO:0007669"/>
    <property type="project" value="UniProtKB-SubCell"/>
</dbReference>
<dbReference type="GO" id="GO:0051539">
    <property type="term" value="F:4 iron, 4 sulfur cluster binding"/>
    <property type="evidence" value="ECO:0007669"/>
    <property type="project" value="UniProtKB-UniRule"/>
</dbReference>
<dbReference type="GO" id="GO:0009055">
    <property type="term" value="F:electron transfer activity"/>
    <property type="evidence" value="ECO:0007669"/>
    <property type="project" value="InterPro"/>
</dbReference>
<dbReference type="GO" id="GO:0046872">
    <property type="term" value="F:metal ion binding"/>
    <property type="evidence" value="ECO:0007669"/>
    <property type="project" value="UniProtKB-KW"/>
</dbReference>
<dbReference type="GO" id="GO:0022900">
    <property type="term" value="P:electron transport chain"/>
    <property type="evidence" value="ECO:0007669"/>
    <property type="project" value="UniProtKB-UniRule"/>
</dbReference>
<dbReference type="FunFam" id="1.10.15.40:FF:000001">
    <property type="entry name" value="Ion-translocating oxidoreductase complex subunit B"/>
    <property type="match status" value="1"/>
</dbReference>
<dbReference type="Gene3D" id="3.30.70.20">
    <property type="match status" value="1"/>
</dbReference>
<dbReference type="Gene3D" id="1.10.15.40">
    <property type="entry name" value="Electron transport complex subunit B, putative Fe-S cluster"/>
    <property type="match status" value="1"/>
</dbReference>
<dbReference type="HAMAP" id="MF_00463">
    <property type="entry name" value="RsxB_RnfB"/>
    <property type="match status" value="1"/>
</dbReference>
<dbReference type="InterPro" id="IPR007202">
    <property type="entry name" value="4Fe-4S_dom"/>
</dbReference>
<dbReference type="InterPro" id="IPR017896">
    <property type="entry name" value="4Fe4S_Fe-S-bd"/>
</dbReference>
<dbReference type="InterPro" id="IPR017900">
    <property type="entry name" value="4Fe4S_Fe_S_CS"/>
</dbReference>
<dbReference type="InterPro" id="IPR050395">
    <property type="entry name" value="4Fe4S_Ferredoxin_RnfB"/>
</dbReference>
<dbReference type="InterPro" id="IPR010207">
    <property type="entry name" value="Elect_transpt_cplx_RnfB/RsxB"/>
</dbReference>
<dbReference type="InterPro" id="IPR016463">
    <property type="entry name" value="RnfB/RsxB_Proteobac"/>
</dbReference>
<dbReference type="NCBIfam" id="NF003475">
    <property type="entry name" value="PRK05113.1"/>
    <property type="match status" value="1"/>
</dbReference>
<dbReference type="NCBIfam" id="TIGR01944">
    <property type="entry name" value="rnfB"/>
    <property type="match status" value="1"/>
</dbReference>
<dbReference type="PANTHER" id="PTHR43560">
    <property type="entry name" value="ION-TRANSLOCATING OXIDOREDUCTASE COMPLEX SUBUNIT B"/>
    <property type="match status" value="1"/>
</dbReference>
<dbReference type="PANTHER" id="PTHR43560:SF1">
    <property type="entry name" value="ION-TRANSLOCATING OXIDOREDUCTASE COMPLEX SUBUNIT B"/>
    <property type="match status" value="1"/>
</dbReference>
<dbReference type="Pfam" id="PF14697">
    <property type="entry name" value="Fer4_21"/>
    <property type="match status" value="1"/>
</dbReference>
<dbReference type="Pfam" id="PF04060">
    <property type="entry name" value="FeS"/>
    <property type="match status" value="1"/>
</dbReference>
<dbReference type="PIRSF" id="PIRSF005784">
    <property type="entry name" value="Elect_transpt_RnfB"/>
    <property type="match status" value="1"/>
</dbReference>
<dbReference type="SUPFAM" id="SSF54862">
    <property type="entry name" value="4Fe-4S ferredoxins"/>
    <property type="match status" value="1"/>
</dbReference>
<dbReference type="PROSITE" id="PS51656">
    <property type="entry name" value="4FE4S"/>
    <property type="match status" value="1"/>
</dbReference>
<dbReference type="PROSITE" id="PS00198">
    <property type="entry name" value="4FE4S_FER_1"/>
    <property type="match status" value="2"/>
</dbReference>
<dbReference type="PROSITE" id="PS51379">
    <property type="entry name" value="4FE4S_FER_2"/>
    <property type="match status" value="2"/>
</dbReference>
<gene>
    <name evidence="1" type="primary">rnfB</name>
    <name type="ordered locus">ESA_01987</name>
</gene>
<protein>
    <recommendedName>
        <fullName evidence="1">Ion-translocating oxidoreductase complex subunit B</fullName>
        <ecNumber evidence="1">7.-.-.-</ecNumber>
    </recommendedName>
    <alternativeName>
        <fullName evidence="1">Rnf electron transport complex subunit B</fullName>
    </alternativeName>
</protein>
<reference key="1">
    <citation type="journal article" date="2010" name="PLoS ONE">
        <title>Genome sequence of Cronobacter sakazakii BAA-894 and comparative genomic hybridization analysis with other Cronobacter species.</title>
        <authorList>
            <person name="Kucerova E."/>
            <person name="Clifton S.W."/>
            <person name="Xia X.Q."/>
            <person name="Long F."/>
            <person name="Porwollik S."/>
            <person name="Fulton L."/>
            <person name="Fronick C."/>
            <person name="Minx P."/>
            <person name="Kyung K."/>
            <person name="Warren W."/>
            <person name="Fulton R."/>
            <person name="Feng D."/>
            <person name="Wollam A."/>
            <person name="Shah N."/>
            <person name="Bhonagiri V."/>
            <person name="Nash W.E."/>
            <person name="Hallsworth-Pepin K."/>
            <person name="Wilson R.K."/>
            <person name="McClelland M."/>
            <person name="Forsythe S.J."/>
        </authorList>
    </citation>
    <scope>NUCLEOTIDE SEQUENCE [LARGE SCALE GENOMIC DNA]</scope>
    <source>
        <strain>ATCC BAA-894</strain>
    </source>
</reference>
<evidence type="ECO:0000255" key="1">
    <source>
        <dbReference type="HAMAP-Rule" id="MF_00463"/>
    </source>
</evidence>
<accession>A7MMM3</accession>
<keyword id="KW-0004">4Fe-4S</keyword>
<keyword id="KW-0997">Cell inner membrane</keyword>
<keyword id="KW-1003">Cell membrane</keyword>
<keyword id="KW-0249">Electron transport</keyword>
<keyword id="KW-0408">Iron</keyword>
<keyword id="KW-0411">Iron-sulfur</keyword>
<keyword id="KW-0472">Membrane</keyword>
<keyword id="KW-0479">Metal-binding</keyword>
<keyword id="KW-1185">Reference proteome</keyword>
<keyword id="KW-0677">Repeat</keyword>
<keyword id="KW-1278">Translocase</keyword>
<keyword id="KW-0813">Transport</keyword>
<sequence length="192" mass="20654">MEMIVIAVVALTLLALLFGMLLGYASRRFAAEEDPVVDQVDELLPQSQCGQCGYPGCRPYAEAVANNGEQINRCVPGGEPVMQKIATLLNVEPQPLDGDAAMAEPVRMLAVIDEPNCIGCTKCIQACPVDAIVGATRAMHTVMSDLCTGCNLCVDPCPTQCIELRPAATTTDNWKWDLNTIPVRNIPVEQHA</sequence>
<comment type="function">
    <text evidence="1">Part of a membrane-bound complex that couples electron transfer with translocation of ions across the membrane.</text>
</comment>
<comment type="cofactor">
    <cofactor evidence="1">
        <name>[4Fe-4S] cluster</name>
        <dbReference type="ChEBI" id="CHEBI:49883"/>
    </cofactor>
    <text evidence="1">Binds 3 [4Fe-4S] clusters.</text>
</comment>
<comment type="subunit">
    <text evidence="1">The complex is composed of six subunits: RnfA, RnfB, RnfC, RnfD, RnfE and RnfG.</text>
</comment>
<comment type="subcellular location">
    <subcellularLocation>
        <location evidence="1">Cell inner membrane</location>
    </subcellularLocation>
</comment>
<comment type="similarity">
    <text evidence="1">Belongs to the 4Fe4S bacterial-type ferredoxin family. RnfB subfamily.</text>
</comment>
<feature type="chain" id="PRO_1000013644" description="Ion-translocating oxidoreductase complex subunit B">
    <location>
        <begin position="1"/>
        <end position="192"/>
    </location>
</feature>
<feature type="domain" description="4Fe-4S" evidence="1">
    <location>
        <begin position="32"/>
        <end position="91"/>
    </location>
</feature>
<feature type="domain" description="4Fe-4S ferredoxin-type 1" evidence="1">
    <location>
        <begin position="108"/>
        <end position="137"/>
    </location>
</feature>
<feature type="domain" description="4Fe-4S ferredoxin-type 2" evidence="1">
    <location>
        <begin position="138"/>
        <end position="167"/>
    </location>
</feature>
<feature type="region of interest" description="Hydrophobic" evidence="1">
    <location>
        <begin position="1"/>
        <end position="26"/>
    </location>
</feature>
<feature type="binding site" evidence="1">
    <location>
        <position position="49"/>
    </location>
    <ligand>
        <name>[4Fe-4S] cluster</name>
        <dbReference type="ChEBI" id="CHEBI:49883"/>
        <label>1</label>
    </ligand>
</feature>
<feature type="binding site" evidence="1">
    <location>
        <position position="52"/>
    </location>
    <ligand>
        <name>[4Fe-4S] cluster</name>
        <dbReference type="ChEBI" id="CHEBI:49883"/>
        <label>1</label>
    </ligand>
</feature>
<feature type="binding site" evidence="1">
    <location>
        <position position="57"/>
    </location>
    <ligand>
        <name>[4Fe-4S] cluster</name>
        <dbReference type="ChEBI" id="CHEBI:49883"/>
        <label>1</label>
    </ligand>
</feature>
<feature type="binding site" evidence="1">
    <location>
        <position position="74"/>
    </location>
    <ligand>
        <name>[4Fe-4S] cluster</name>
        <dbReference type="ChEBI" id="CHEBI:49883"/>
        <label>1</label>
    </ligand>
</feature>
<feature type="binding site" evidence="1">
    <location>
        <position position="117"/>
    </location>
    <ligand>
        <name>[4Fe-4S] cluster</name>
        <dbReference type="ChEBI" id="CHEBI:49883"/>
        <label>2</label>
    </ligand>
</feature>
<feature type="binding site" evidence="1">
    <location>
        <position position="120"/>
    </location>
    <ligand>
        <name>[4Fe-4S] cluster</name>
        <dbReference type="ChEBI" id="CHEBI:49883"/>
        <label>2</label>
    </ligand>
</feature>
<feature type="binding site" evidence="1">
    <location>
        <position position="123"/>
    </location>
    <ligand>
        <name>[4Fe-4S] cluster</name>
        <dbReference type="ChEBI" id="CHEBI:49883"/>
        <label>2</label>
    </ligand>
</feature>
<feature type="binding site" evidence="1">
    <location>
        <position position="127"/>
    </location>
    <ligand>
        <name>[4Fe-4S] cluster</name>
        <dbReference type="ChEBI" id="CHEBI:49883"/>
        <label>3</label>
    </ligand>
</feature>
<feature type="binding site" evidence="1">
    <location>
        <position position="147"/>
    </location>
    <ligand>
        <name>[4Fe-4S] cluster</name>
        <dbReference type="ChEBI" id="CHEBI:49883"/>
        <label>3</label>
    </ligand>
</feature>
<feature type="binding site" evidence="1">
    <location>
        <position position="150"/>
    </location>
    <ligand>
        <name>[4Fe-4S] cluster</name>
        <dbReference type="ChEBI" id="CHEBI:49883"/>
        <label>3</label>
    </ligand>
</feature>
<feature type="binding site" evidence="1">
    <location>
        <position position="153"/>
    </location>
    <ligand>
        <name>[4Fe-4S] cluster</name>
        <dbReference type="ChEBI" id="CHEBI:49883"/>
        <label>3</label>
    </ligand>
</feature>
<feature type="binding site" evidence="1">
    <location>
        <position position="157"/>
    </location>
    <ligand>
        <name>[4Fe-4S] cluster</name>
        <dbReference type="ChEBI" id="CHEBI:49883"/>
        <label>2</label>
    </ligand>
</feature>